<keyword id="KW-0134">Cell wall</keyword>
<keyword id="KW-0325">Glycoprotein</keyword>
<keyword id="KW-0677">Repeat</keyword>
<keyword id="KW-0964">Secreted</keyword>
<keyword id="KW-0732">Signal</keyword>
<dbReference type="EMBL" id="AJ001441">
    <property type="protein sequence ID" value="CAA04765.1"/>
    <property type="molecule type" value="mRNA"/>
</dbReference>
<dbReference type="EMBL" id="AJ271296">
    <property type="protein sequence ID" value="CAC00481.1"/>
    <property type="molecule type" value="Genomic_DNA"/>
</dbReference>
<dbReference type="SMR" id="Q9P403"/>
<dbReference type="GlyCosmos" id="Q9P403">
    <property type="glycosylation" value="2 sites, No reported glycans"/>
</dbReference>
<dbReference type="GO" id="GO:0005576">
    <property type="term" value="C:extracellular region"/>
    <property type="evidence" value="ECO:0000314"/>
    <property type="project" value="UniProtKB"/>
</dbReference>
<dbReference type="GO" id="GO:0030446">
    <property type="term" value="C:hyphal cell wall"/>
    <property type="evidence" value="ECO:0000314"/>
    <property type="project" value="UniProtKB"/>
</dbReference>
<dbReference type="CDD" id="cd00118">
    <property type="entry name" value="LysM"/>
    <property type="match status" value="2"/>
</dbReference>
<dbReference type="Gene3D" id="3.10.350.10">
    <property type="entry name" value="LysM domain"/>
    <property type="match status" value="2"/>
</dbReference>
<dbReference type="InterPro" id="IPR018392">
    <property type="entry name" value="LysM_dom"/>
</dbReference>
<dbReference type="InterPro" id="IPR036779">
    <property type="entry name" value="LysM_dom_sf"/>
</dbReference>
<dbReference type="PANTHER" id="PTHR33734">
    <property type="entry name" value="LYSM DOMAIN-CONTAINING GPI-ANCHORED PROTEIN 2"/>
    <property type="match status" value="1"/>
</dbReference>
<dbReference type="PANTHER" id="PTHR33734:SF22">
    <property type="entry name" value="MEMBRANE-BOUND LYTIC MUREIN TRANSGLYCOSYLASE D"/>
    <property type="match status" value="1"/>
</dbReference>
<dbReference type="Pfam" id="PF01476">
    <property type="entry name" value="LysM"/>
    <property type="match status" value="2"/>
</dbReference>
<dbReference type="SMART" id="SM00257">
    <property type="entry name" value="LysM"/>
    <property type="match status" value="2"/>
</dbReference>
<dbReference type="SUPFAM" id="SSF54106">
    <property type="entry name" value="LysM domain"/>
    <property type="match status" value="2"/>
</dbReference>
<dbReference type="PROSITE" id="PS51782">
    <property type="entry name" value="LYSM"/>
    <property type="match status" value="2"/>
</dbReference>
<sequence length="230" mass="24518">MQTSFVALLAVAASLASALPHGGNSYEASLPEPTNLPEPTKLPEPVEGPYKPKPPILPEPIKDNYKPKTPILPEHVEGPYKPKLPEPTTGDPKNNTLPVPTCVDGKIKTHKVKSGESLTTIAEKYDTGICNIAKLNNLADPNFVDLNQDLQIPTDACEKDNTSCIKPDGTATCVKDGKKDGKDIYSVVSGDTLTSIAQALQITLQSLKDANPGVVPEHLNVGQKLNVPVC</sequence>
<comment type="function">
    <text evidence="6">May have roles in host-pathogen interaction, including establishment and maintenance of biotrophy, prevention of host recognition of the fungus and a barrier to host defense molecules.</text>
</comment>
<comment type="subunit">
    <text evidence="7 8">Forms a multimeric structure.</text>
</comment>
<comment type="subcellular location">
    <subcellularLocation>
        <location evidence="5">Secreted</location>
        <location evidence="5">Cell wall</location>
    </subcellularLocation>
    <text>Cell wall and surrounding interfacial matrix.</text>
</comment>
<comment type="tissue specificity">
    <text evidence="4 5">Expressed in penetration hyphae, infection vesicles and primary hyphae (intracellular hyphae).</text>
</comment>
<comment type="developmental stage">
    <text evidence="4 5">Expressed during the biotrophic phase of host-pathogen interaction.</text>
</comment>
<comment type="PTM">
    <text evidence="5 6">N-glycosylated and may be O-glycosylated.</text>
</comment>
<proteinExistence type="evidence at protein level"/>
<accession>Q9P403</accession>
<accession>O13445</accession>
<evidence type="ECO:0000255" key="1"/>
<evidence type="ECO:0000255" key="2">
    <source>
        <dbReference type="PROSITE-ProRule" id="PRU01118"/>
    </source>
</evidence>
<evidence type="ECO:0000256" key="3">
    <source>
        <dbReference type="SAM" id="MobiDB-lite"/>
    </source>
</evidence>
<evidence type="ECO:0000269" key="4">
    <source>
    </source>
</evidence>
<evidence type="ECO:0000269" key="5">
    <source ref="3"/>
</evidence>
<evidence type="ECO:0000303" key="6">
    <source>
    </source>
</evidence>
<evidence type="ECO:0000303" key="7">
    <source ref="3"/>
</evidence>
<evidence type="ECO:0000305" key="8"/>
<evidence type="ECO:0000312" key="9">
    <source>
        <dbReference type="EMBL" id="CAC00481.1"/>
    </source>
</evidence>
<reference evidence="8" key="1">
    <citation type="journal article" date="1998" name="Plant J.">
        <title>Expression cloning of a fungal proline-rich glycoprotein specific to the biotrophic interface formed in the Colletotrichum-bean interaction.</title>
        <authorList>
            <person name="Perfect S.E."/>
            <person name="O'Connell R.J."/>
            <person name="Green E.F."/>
            <person name="Doering-Saad C."/>
            <person name="Green J.R."/>
        </authorList>
    </citation>
    <scope>NUCLEOTIDE SEQUENCE [MRNA]</scope>
    <scope>TISSUE SPECIFICITY</scope>
    <source>
        <strain evidence="4">LARS 137 / race kappa</strain>
    </source>
</reference>
<reference evidence="9" key="2">
    <citation type="submission" date="2000-07" db="EMBL/GenBank/DDBJ databases">
        <title>Functional studies of CIH1, a biotrophy-related gene from Colletotrichum lindemuthianum.</title>
        <authorList>
            <person name="Perfect S.E."/>
            <person name="O'Connell R.J."/>
            <person name="Green J.R."/>
        </authorList>
    </citation>
    <scope>NUCLEOTIDE SEQUENCE [GENOMIC DNA]</scope>
    <source>
        <strain evidence="9">ATCC 56987 / race gamma</strain>
    </source>
</reference>
<reference evidence="8" key="3">
    <citation type="journal article" date="1994" name="New Phytol.">
        <title>Identification of glycoproteins specific to biotrophic intracellular hyphae formed in the Colletotrichum lindemuthianum-bean interaction.</title>
        <authorList>
            <person name="Pain N.A."/>
            <person name="O'Connell R.J."/>
            <person name="Mendgen K."/>
            <person name="Green J.R."/>
        </authorList>
        <dbReference type="AGRICOLA" id="IND20502939"/>
    </citation>
    <scope>GLYCOSYLATION</scope>
    <scope>SUBCELLULAR LOCATION</scope>
    <scope>TISSUE SPECIFICITY</scope>
    <source>
        <strain evidence="5">ATCC 56987 / race gamma</strain>
    </source>
</reference>
<gene>
    <name type="primary">CIH1</name>
</gene>
<protein>
    <recommendedName>
        <fullName>Intracellular hyphae protein 1</fullName>
    </recommendedName>
</protein>
<organism>
    <name type="scientific">Colletotrichum lindemuthianum</name>
    <name type="common">Bean anthracnose fungus</name>
    <name type="synonym">Glomerella lindemuthiana</name>
    <dbReference type="NCBI Taxonomy" id="290576"/>
    <lineage>
        <taxon>Eukaryota</taxon>
        <taxon>Fungi</taxon>
        <taxon>Dikarya</taxon>
        <taxon>Ascomycota</taxon>
        <taxon>Pezizomycotina</taxon>
        <taxon>Sordariomycetes</taxon>
        <taxon>Hypocreomycetidae</taxon>
        <taxon>Glomerellales</taxon>
        <taxon>Glomerellaceae</taxon>
        <taxon>Colletotrichum</taxon>
        <taxon>Colletotrichum orbiculare species complex</taxon>
    </lineage>
</organism>
<name>CIH1_COLLN</name>
<feature type="signal peptide" evidence="1">
    <location>
        <begin position="1"/>
        <end position="18"/>
    </location>
</feature>
<feature type="chain" id="PRO_0000020931" description="Intracellular hyphae protein 1">
    <location>
        <begin position="19"/>
        <end position="230"/>
    </location>
</feature>
<feature type="repeat" description="1-1" evidence="4">
    <location>
        <begin position="30"/>
        <end position="33"/>
    </location>
</feature>
<feature type="repeat" description="1-2" evidence="4">
    <location>
        <begin position="36"/>
        <end position="39"/>
    </location>
</feature>
<feature type="repeat" description="1-3" evidence="4">
    <location>
        <begin position="42"/>
        <end position="45"/>
    </location>
</feature>
<feature type="repeat" description="2-1" evidence="4">
    <location>
        <begin position="46"/>
        <end position="49"/>
    </location>
</feature>
<feature type="repeat" description="3-1" evidence="4">
    <location>
        <begin position="50"/>
        <end position="53"/>
    </location>
</feature>
<feature type="repeat" description="1-4" evidence="4">
    <location>
        <begin position="57"/>
        <end position="60"/>
    </location>
</feature>
<feature type="repeat" description="3-2" evidence="4">
    <location>
        <begin position="65"/>
        <end position="68"/>
    </location>
</feature>
<feature type="repeat" description="2-2" evidence="4">
    <location>
        <begin position="76"/>
        <end position="79"/>
    </location>
</feature>
<feature type="repeat" description="3-3" evidence="4">
    <location>
        <begin position="80"/>
        <end position="83"/>
    </location>
</feature>
<feature type="repeat" description="1-5" evidence="4">
    <location>
        <begin position="84"/>
        <end position="87"/>
    </location>
</feature>
<feature type="domain" description="LysM 1" evidence="2">
    <location>
        <begin position="108"/>
        <end position="152"/>
    </location>
</feature>
<feature type="domain" description="LysM 2" evidence="2">
    <location>
        <begin position="183"/>
        <end position="227"/>
    </location>
</feature>
<feature type="region of interest" description="Disordered" evidence="3">
    <location>
        <begin position="20"/>
        <end position="102"/>
    </location>
</feature>
<feature type="region of interest" description="5 X 4 AA repeats of L-P-E-P">
    <location>
        <begin position="30"/>
        <end position="87"/>
    </location>
</feature>
<feature type="region of interest" description="2 X 4 AA repeats of V-E-G-P">
    <location>
        <begin position="46"/>
        <end position="87"/>
    </location>
</feature>
<feature type="region of interest" description="3 X 4 AA repeats of Y-K-P-K">
    <location>
        <begin position="50"/>
        <end position="83"/>
    </location>
</feature>
<feature type="compositionally biased region" description="Basic and acidic residues" evidence="3">
    <location>
        <begin position="74"/>
        <end position="84"/>
    </location>
</feature>
<feature type="glycosylation site" description="N-linked (GlcNAc...) asparagine" evidence="1">
    <location>
        <position position="94"/>
    </location>
</feature>
<feature type="glycosylation site" description="N-linked (GlcNAc...) asparagine" evidence="1">
    <location>
        <position position="161"/>
    </location>
</feature>
<feature type="sequence conflict" description="In Ref. 1; CAA04765." evidence="8" ref="1">
    <original>K</original>
    <variation>Q</variation>
    <location>
        <position position="93"/>
    </location>
</feature>
<feature type="sequence conflict" description="In Ref. 1; CAA04765." evidence="8" ref="1">
    <original>V</original>
    <variation>I</variation>
    <location>
        <position position="144"/>
    </location>
</feature>